<comment type="function">
    <text evidence="1">Catalyzes the attachment of proline to tRNA(Pro) in a two-step reaction: proline is first activated by ATP to form Pro-AMP and then transferred to the acceptor end of tRNA(Pro).</text>
</comment>
<comment type="catalytic activity">
    <reaction evidence="1">
        <text>tRNA(Pro) + L-proline + ATP = L-prolyl-tRNA(Pro) + AMP + diphosphate</text>
        <dbReference type="Rhea" id="RHEA:14305"/>
        <dbReference type="Rhea" id="RHEA-COMP:9700"/>
        <dbReference type="Rhea" id="RHEA-COMP:9702"/>
        <dbReference type="ChEBI" id="CHEBI:30616"/>
        <dbReference type="ChEBI" id="CHEBI:33019"/>
        <dbReference type="ChEBI" id="CHEBI:60039"/>
        <dbReference type="ChEBI" id="CHEBI:78442"/>
        <dbReference type="ChEBI" id="CHEBI:78532"/>
        <dbReference type="ChEBI" id="CHEBI:456215"/>
        <dbReference type="EC" id="6.1.1.15"/>
    </reaction>
</comment>
<comment type="subunit">
    <text evidence="1">Homodimer.</text>
</comment>
<comment type="subcellular location">
    <subcellularLocation>
        <location evidence="1">Cytoplasm</location>
    </subcellularLocation>
</comment>
<comment type="domain">
    <text evidence="1">Consists of three domains: the N-terminal catalytic domain, the anticodon-binding domain and the C-terminal extension.</text>
</comment>
<comment type="similarity">
    <text evidence="1">Belongs to the class-II aminoacyl-tRNA synthetase family. ProS type 3 subfamily.</text>
</comment>
<keyword id="KW-0030">Aminoacyl-tRNA synthetase</keyword>
<keyword id="KW-0067">ATP-binding</keyword>
<keyword id="KW-0963">Cytoplasm</keyword>
<keyword id="KW-0436">Ligase</keyword>
<keyword id="KW-0547">Nucleotide-binding</keyword>
<keyword id="KW-0648">Protein biosynthesis</keyword>
<keyword id="KW-1185">Reference proteome</keyword>
<name>SYP_METST</name>
<evidence type="ECO:0000255" key="1">
    <source>
        <dbReference type="HAMAP-Rule" id="MF_01571"/>
    </source>
</evidence>
<dbReference type="EC" id="6.1.1.15" evidence="1"/>
<dbReference type="EMBL" id="CP000102">
    <property type="protein sequence ID" value="ABC57392.1"/>
    <property type="molecule type" value="Genomic_DNA"/>
</dbReference>
<dbReference type="RefSeq" id="WP_011406591.1">
    <property type="nucleotide sequence ID" value="NC_007681.1"/>
</dbReference>
<dbReference type="SMR" id="Q2NFL1"/>
<dbReference type="STRING" id="339860.Msp_1004"/>
<dbReference type="GeneID" id="41325573"/>
<dbReference type="KEGG" id="mst:Msp_1004"/>
<dbReference type="eggNOG" id="arCOG00402">
    <property type="taxonomic scope" value="Archaea"/>
</dbReference>
<dbReference type="HOGENOM" id="CLU_001882_4_2_2"/>
<dbReference type="OrthoDB" id="7375at2157"/>
<dbReference type="Proteomes" id="UP000001931">
    <property type="component" value="Chromosome"/>
</dbReference>
<dbReference type="GO" id="GO:0017101">
    <property type="term" value="C:aminoacyl-tRNA synthetase multienzyme complex"/>
    <property type="evidence" value="ECO:0007669"/>
    <property type="project" value="TreeGrafter"/>
</dbReference>
<dbReference type="GO" id="GO:0005737">
    <property type="term" value="C:cytoplasm"/>
    <property type="evidence" value="ECO:0007669"/>
    <property type="project" value="UniProtKB-SubCell"/>
</dbReference>
<dbReference type="GO" id="GO:0005524">
    <property type="term" value="F:ATP binding"/>
    <property type="evidence" value="ECO:0007669"/>
    <property type="project" value="UniProtKB-UniRule"/>
</dbReference>
<dbReference type="GO" id="GO:0004827">
    <property type="term" value="F:proline-tRNA ligase activity"/>
    <property type="evidence" value="ECO:0007669"/>
    <property type="project" value="UniProtKB-UniRule"/>
</dbReference>
<dbReference type="GO" id="GO:0006433">
    <property type="term" value="P:prolyl-tRNA aminoacylation"/>
    <property type="evidence" value="ECO:0007669"/>
    <property type="project" value="UniProtKB-UniRule"/>
</dbReference>
<dbReference type="CDD" id="cd00862">
    <property type="entry name" value="ProRS_anticodon_zinc"/>
    <property type="match status" value="1"/>
</dbReference>
<dbReference type="CDD" id="cd00778">
    <property type="entry name" value="ProRS_core_arch_euk"/>
    <property type="match status" value="1"/>
</dbReference>
<dbReference type="FunFam" id="3.30.930.10:FF:000037">
    <property type="entry name" value="Proline--tRNA ligase"/>
    <property type="match status" value="1"/>
</dbReference>
<dbReference type="Gene3D" id="3.40.50.800">
    <property type="entry name" value="Anticodon-binding domain"/>
    <property type="match status" value="1"/>
</dbReference>
<dbReference type="Gene3D" id="3.30.930.10">
    <property type="entry name" value="Bira Bifunctional Protein, Domain 2"/>
    <property type="match status" value="1"/>
</dbReference>
<dbReference type="Gene3D" id="3.30.110.30">
    <property type="entry name" value="C-terminal domain of ProRS"/>
    <property type="match status" value="1"/>
</dbReference>
<dbReference type="HAMAP" id="MF_01571">
    <property type="entry name" value="Pro_tRNA_synth_type3"/>
    <property type="match status" value="1"/>
</dbReference>
<dbReference type="InterPro" id="IPR002314">
    <property type="entry name" value="aa-tRNA-synt_IIb"/>
</dbReference>
<dbReference type="InterPro" id="IPR006195">
    <property type="entry name" value="aa-tRNA-synth_II"/>
</dbReference>
<dbReference type="InterPro" id="IPR045864">
    <property type="entry name" value="aa-tRNA-synth_II/BPL/LPL"/>
</dbReference>
<dbReference type="InterPro" id="IPR004154">
    <property type="entry name" value="Anticodon-bd"/>
</dbReference>
<dbReference type="InterPro" id="IPR036621">
    <property type="entry name" value="Anticodon-bd_dom_sf"/>
</dbReference>
<dbReference type="InterPro" id="IPR002316">
    <property type="entry name" value="Pro-tRNA-ligase_IIa"/>
</dbReference>
<dbReference type="InterPro" id="IPR004499">
    <property type="entry name" value="Pro-tRNA-ligase_IIa_arc-type"/>
</dbReference>
<dbReference type="InterPro" id="IPR016061">
    <property type="entry name" value="Pro-tRNA_ligase_II_C"/>
</dbReference>
<dbReference type="InterPro" id="IPR017449">
    <property type="entry name" value="Pro-tRNA_synth_II"/>
</dbReference>
<dbReference type="InterPro" id="IPR033721">
    <property type="entry name" value="ProRS_core_arch_euk"/>
</dbReference>
<dbReference type="NCBIfam" id="TIGR00408">
    <property type="entry name" value="proS_fam_I"/>
    <property type="match status" value="1"/>
</dbReference>
<dbReference type="PANTHER" id="PTHR43382:SF2">
    <property type="entry name" value="BIFUNCTIONAL GLUTAMATE_PROLINE--TRNA LIGASE"/>
    <property type="match status" value="1"/>
</dbReference>
<dbReference type="PANTHER" id="PTHR43382">
    <property type="entry name" value="PROLYL-TRNA SYNTHETASE"/>
    <property type="match status" value="1"/>
</dbReference>
<dbReference type="Pfam" id="PF03129">
    <property type="entry name" value="HGTP_anticodon"/>
    <property type="match status" value="1"/>
</dbReference>
<dbReference type="Pfam" id="PF09180">
    <property type="entry name" value="ProRS-C_1"/>
    <property type="match status" value="1"/>
</dbReference>
<dbReference type="Pfam" id="PF00587">
    <property type="entry name" value="tRNA-synt_2b"/>
    <property type="match status" value="1"/>
</dbReference>
<dbReference type="PRINTS" id="PR01046">
    <property type="entry name" value="TRNASYNTHPRO"/>
</dbReference>
<dbReference type="SMART" id="SM00946">
    <property type="entry name" value="ProRS-C_1"/>
    <property type="match status" value="1"/>
</dbReference>
<dbReference type="SUPFAM" id="SSF64586">
    <property type="entry name" value="C-terminal domain of ProRS"/>
    <property type="match status" value="1"/>
</dbReference>
<dbReference type="SUPFAM" id="SSF52954">
    <property type="entry name" value="Class II aaRS ABD-related"/>
    <property type="match status" value="1"/>
</dbReference>
<dbReference type="SUPFAM" id="SSF55681">
    <property type="entry name" value="Class II aaRS and biotin synthetases"/>
    <property type="match status" value="1"/>
</dbReference>
<dbReference type="PROSITE" id="PS50862">
    <property type="entry name" value="AA_TRNA_LIGASE_II"/>
    <property type="match status" value="1"/>
</dbReference>
<proteinExistence type="inferred from homology"/>
<organism>
    <name type="scientific">Methanosphaera stadtmanae (strain ATCC 43021 / DSM 3091 / JCM 11832 / MCB-3)</name>
    <dbReference type="NCBI Taxonomy" id="339860"/>
    <lineage>
        <taxon>Archaea</taxon>
        <taxon>Methanobacteriati</taxon>
        <taxon>Methanobacteriota</taxon>
        <taxon>Methanomada group</taxon>
        <taxon>Methanobacteria</taxon>
        <taxon>Methanobacteriales</taxon>
        <taxon>Methanobacteriaceae</taxon>
        <taxon>Methanosphaera</taxon>
    </lineage>
</organism>
<protein>
    <recommendedName>
        <fullName evidence="1">Proline--tRNA ligase</fullName>
        <ecNumber evidence="1">6.1.1.15</ecNumber>
    </recommendedName>
    <alternativeName>
        <fullName evidence="1">Prolyl-tRNA synthetase</fullName>
        <shortName evidence="1">ProRS</shortName>
    </alternativeName>
</protein>
<reference key="1">
    <citation type="journal article" date="2006" name="J. Bacteriol.">
        <title>The genome sequence of Methanosphaera stadtmanae reveals why this human intestinal archaeon is restricted to methanol and H2 for methane formation and ATP synthesis.</title>
        <authorList>
            <person name="Fricke W.F."/>
            <person name="Seedorf H."/>
            <person name="Henne A."/>
            <person name="Kruer M."/>
            <person name="Liesegang H."/>
            <person name="Hedderich R."/>
            <person name="Gottschalk G."/>
            <person name="Thauer R.K."/>
        </authorList>
    </citation>
    <scope>NUCLEOTIDE SEQUENCE [LARGE SCALE GENOMIC DNA]</scope>
    <source>
        <strain>ATCC 43021 / DSM 3091 / JCM 11832 / MCB-3</strain>
    </source>
</reference>
<accession>Q2NFL1</accession>
<feature type="chain" id="PRO_0000249163" description="Proline--tRNA ligase">
    <location>
        <begin position="1"/>
        <end position="469"/>
    </location>
</feature>
<gene>
    <name evidence="1" type="primary">proS</name>
    <name type="ordered locus">Msp_1004</name>
</gene>
<sequence>MKNFSEWFHNILEEAELMDARYPIKGMSVWLPRGFQIRKYALNALQELLDKDHEEVLFPMLIPQSELAKEAIHVKGFEEEVYWVTKGGKRDLNEHLALRPTSETSIYPMFSLWVRSHMDLPIKVYQTVNTFRYETKHTRPLIRVREITTFNETHTAHATEEEAEKEVMEGIEIYKTFFDELGIPYSISKRPEWDKFPGSKYTMAFDMIMPDGKTLQIATVHNLGTTFAHTFDIQFENEDGTHDYVHQVCYGLSDRVIASLIAAHGDEKGLSLPPVVAPEQVIIIPIIFKENQDVVLNFTDNLEKLLKNNGIRVKQDKRELRPGKKYYEWEKRGVPLRIEVGPRDIENNTIVINRRDTGDKEFVDYDENTIVDVVKDRLDSITHDMKEASNKFQEEKTFAIEKPEQIKKTINKKGGIITCSWCGETDCGKDMEEKFDIDVLGTQESDLENKTCINCGKDASYKVLISKTY</sequence>